<sequence>MKNCLKIIHWDRCSIEEREKILSRPILDDLSAIKKQVKTIISDVNSLGDQALYNYTNIFDKIKLNNIKISHQDLVKAELCIDVKAKNAIQVAIDNIRTFHISQNISTLNIEINKGIYCQQIVRPIGSVGLYIPGGSAPLLSTVLMLAIPARIAGCKKIVLCSPPPITNEVLYASKICGVQEIFQVGGAQAIAALGFGTETI</sequence>
<gene>
    <name type="primary">hisD</name>
</gene>
<accession>Q9RQ82</accession>
<dbReference type="EC" id="1.1.1.23"/>
<dbReference type="EMBL" id="AF129283">
    <property type="protein sequence ID" value="AAF13776.1"/>
    <property type="molecule type" value="Genomic_DNA"/>
</dbReference>
<dbReference type="SMR" id="Q9RQ82"/>
<dbReference type="UniPathway" id="UPA00031">
    <property type="reaction ID" value="UER00014"/>
</dbReference>
<dbReference type="GO" id="GO:0005829">
    <property type="term" value="C:cytosol"/>
    <property type="evidence" value="ECO:0007669"/>
    <property type="project" value="TreeGrafter"/>
</dbReference>
<dbReference type="GO" id="GO:0004399">
    <property type="term" value="F:histidinol dehydrogenase activity"/>
    <property type="evidence" value="ECO:0007669"/>
    <property type="project" value="UniProtKB-EC"/>
</dbReference>
<dbReference type="GO" id="GO:0046872">
    <property type="term" value="F:metal ion binding"/>
    <property type="evidence" value="ECO:0007669"/>
    <property type="project" value="UniProtKB-KW"/>
</dbReference>
<dbReference type="GO" id="GO:0051287">
    <property type="term" value="F:NAD binding"/>
    <property type="evidence" value="ECO:0007669"/>
    <property type="project" value="InterPro"/>
</dbReference>
<dbReference type="GO" id="GO:0000105">
    <property type="term" value="P:L-histidine biosynthetic process"/>
    <property type="evidence" value="ECO:0007669"/>
    <property type="project" value="UniProtKB-UniPathway"/>
</dbReference>
<dbReference type="Gene3D" id="3.40.50.1980">
    <property type="entry name" value="Nitrogenase molybdenum iron protein domain"/>
    <property type="match status" value="1"/>
</dbReference>
<dbReference type="InterPro" id="IPR016161">
    <property type="entry name" value="Ald_DH/histidinol_DH"/>
</dbReference>
<dbReference type="InterPro" id="IPR012131">
    <property type="entry name" value="Hstdl_DH"/>
</dbReference>
<dbReference type="PANTHER" id="PTHR21256:SF2">
    <property type="entry name" value="HISTIDINE BIOSYNTHESIS TRIFUNCTIONAL PROTEIN"/>
    <property type="match status" value="1"/>
</dbReference>
<dbReference type="PANTHER" id="PTHR21256">
    <property type="entry name" value="HISTIDINOL DEHYDROGENASE HDH"/>
    <property type="match status" value="1"/>
</dbReference>
<dbReference type="Pfam" id="PF00815">
    <property type="entry name" value="Histidinol_dh"/>
    <property type="match status" value="1"/>
</dbReference>
<dbReference type="PRINTS" id="PR00083">
    <property type="entry name" value="HOLDHDRGNASE"/>
</dbReference>
<dbReference type="SUPFAM" id="SSF53720">
    <property type="entry name" value="ALDH-like"/>
    <property type="match status" value="1"/>
</dbReference>
<feature type="chain" id="PRO_0000135745" description="Histidinol dehydrogenase">
    <location>
        <begin position="1"/>
        <end position="201" status="greater than"/>
    </location>
</feature>
<feature type="non-terminal residue">
    <location>
        <position position="201"/>
    </location>
</feature>
<reference key="1">
    <citation type="journal article" date="1999" name="Mol. Biol. Evol.">
        <title>Sequence evolution in bacterial endosymbionts having extreme base compositions.</title>
        <authorList>
            <person name="Clark M.A."/>
            <person name="Moran N.A."/>
            <person name="Baumann P."/>
        </authorList>
    </citation>
    <scope>NUCLEOTIDE SEQUENCE [GENOMIC DNA]</scope>
</reference>
<keyword id="KW-0028">Amino-acid biosynthesis</keyword>
<keyword id="KW-0368">Histidine biosynthesis</keyword>
<keyword id="KW-0479">Metal-binding</keyword>
<keyword id="KW-0520">NAD</keyword>
<keyword id="KW-0560">Oxidoreductase</keyword>
<keyword id="KW-0862">Zinc</keyword>
<comment type="function">
    <text evidence="1">Catalyzes the sequential NAD-dependent oxidations of L-histidinol to L-histidinaldehyde and then to L-histidine.</text>
</comment>
<comment type="catalytic activity">
    <reaction>
        <text>L-histidinol + 2 NAD(+) + H2O = L-histidine + 2 NADH + 3 H(+)</text>
        <dbReference type="Rhea" id="RHEA:20641"/>
        <dbReference type="ChEBI" id="CHEBI:15377"/>
        <dbReference type="ChEBI" id="CHEBI:15378"/>
        <dbReference type="ChEBI" id="CHEBI:57540"/>
        <dbReference type="ChEBI" id="CHEBI:57595"/>
        <dbReference type="ChEBI" id="CHEBI:57699"/>
        <dbReference type="ChEBI" id="CHEBI:57945"/>
        <dbReference type="EC" id="1.1.1.23"/>
    </reaction>
</comment>
<comment type="cofactor">
    <cofactor evidence="1">
        <name>Zn(2+)</name>
        <dbReference type="ChEBI" id="CHEBI:29105"/>
    </cofactor>
    <text evidence="1">Binds 1 zinc ion per subunit.</text>
</comment>
<comment type="pathway">
    <text>Amino-acid biosynthesis; L-histidine biosynthesis; L-histidine from 5-phospho-alpha-D-ribose 1-diphosphate: step 9/9.</text>
</comment>
<comment type="subunit">
    <text evidence="1">Homodimer.</text>
</comment>
<comment type="similarity">
    <text evidence="2">Belongs to the histidinol dehydrogenase family.</text>
</comment>
<organism>
    <name type="scientific">Buchnera aphidicola subsp. Melaphis rhois</name>
    <dbReference type="NCBI Taxonomy" id="118103"/>
    <lineage>
        <taxon>Bacteria</taxon>
        <taxon>Pseudomonadati</taxon>
        <taxon>Pseudomonadota</taxon>
        <taxon>Gammaproteobacteria</taxon>
        <taxon>Enterobacterales</taxon>
        <taxon>Erwiniaceae</taxon>
        <taxon>Buchnera</taxon>
    </lineage>
</organism>
<evidence type="ECO:0000250" key="1"/>
<evidence type="ECO:0000305" key="2"/>
<name>HISX_BUCMH</name>
<proteinExistence type="inferred from homology"/>
<protein>
    <recommendedName>
        <fullName>Histidinol dehydrogenase</fullName>
        <shortName>HDH</shortName>
        <ecNumber>1.1.1.23</ecNumber>
    </recommendedName>
</protein>